<dbReference type="EC" id="3.6.4.10" evidence="5"/>
<dbReference type="EMBL" id="U92313">
    <property type="protein sequence ID" value="AAB62091.1"/>
    <property type="molecule type" value="mRNA"/>
</dbReference>
<dbReference type="RefSeq" id="NP_001233758.1">
    <property type="nucleotide sequence ID" value="NM_001246829.1"/>
</dbReference>
<dbReference type="SMR" id="O35501"/>
<dbReference type="PaxDb" id="10029-NP_001233758.1"/>
<dbReference type="GeneID" id="100689405"/>
<dbReference type="KEGG" id="cge:100689405"/>
<dbReference type="CTD" id="3313"/>
<dbReference type="eggNOG" id="KOG0102">
    <property type="taxonomic scope" value="Eukaryota"/>
</dbReference>
<dbReference type="OrthoDB" id="2401965at2759"/>
<dbReference type="PRO" id="PR:O35501"/>
<dbReference type="Proteomes" id="UP000694386">
    <property type="component" value="Unplaced"/>
</dbReference>
<dbReference type="Proteomes" id="UP001108280">
    <property type="component" value="Chromosome 2"/>
</dbReference>
<dbReference type="GO" id="GO:0005737">
    <property type="term" value="C:cytoplasm"/>
    <property type="evidence" value="ECO:0000250"/>
    <property type="project" value="UniProtKB"/>
</dbReference>
<dbReference type="GO" id="GO:0005759">
    <property type="term" value="C:mitochondrial matrix"/>
    <property type="evidence" value="ECO:0000250"/>
    <property type="project" value="UniProtKB"/>
</dbReference>
<dbReference type="GO" id="GO:0005739">
    <property type="term" value="C:mitochondrion"/>
    <property type="evidence" value="ECO:0000250"/>
    <property type="project" value="UniProtKB"/>
</dbReference>
<dbReference type="GO" id="GO:0005730">
    <property type="term" value="C:nucleolus"/>
    <property type="evidence" value="ECO:0007669"/>
    <property type="project" value="UniProtKB-SubCell"/>
</dbReference>
<dbReference type="GO" id="GO:0005524">
    <property type="term" value="F:ATP binding"/>
    <property type="evidence" value="ECO:0007669"/>
    <property type="project" value="UniProtKB-KW"/>
</dbReference>
<dbReference type="GO" id="GO:0016887">
    <property type="term" value="F:ATP hydrolysis activity"/>
    <property type="evidence" value="ECO:0000250"/>
    <property type="project" value="UniProtKB"/>
</dbReference>
<dbReference type="GO" id="GO:0140662">
    <property type="term" value="F:ATP-dependent protein folding chaperone"/>
    <property type="evidence" value="ECO:0007669"/>
    <property type="project" value="InterPro"/>
</dbReference>
<dbReference type="GO" id="GO:0051082">
    <property type="term" value="F:unfolded protein binding"/>
    <property type="evidence" value="ECO:0007669"/>
    <property type="project" value="InterPro"/>
</dbReference>
<dbReference type="GO" id="GO:0036444">
    <property type="term" value="P:calcium import into the mitochondrion"/>
    <property type="evidence" value="ECO:0000250"/>
    <property type="project" value="UniProtKB"/>
</dbReference>
<dbReference type="GO" id="GO:0030218">
    <property type="term" value="P:erythrocyte differentiation"/>
    <property type="evidence" value="ECO:0000250"/>
    <property type="project" value="UniProtKB"/>
</dbReference>
<dbReference type="GO" id="GO:0016226">
    <property type="term" value="P:iron-sulfur cluster assembly"/>
    <property type="evidence" value="ECO:0000250"/>
    <property type="project" value="UniProtKB"/>
</dbReference>
<dbReference type="GO" id="GO:0045647">
    <property type="term" value="P:negative regulation of erythrocyte differentiation"/>
    <property type="evidence" value="ECO:0000250"/>
    <property type="project" value="UniProtKB"/>
</dbReference>
<dbReference type="GO" id="GO:1902037">
    <property type="term" value="P:negative regulation of hematopoietic stem cell differentiation"/>
    <property type="evidence" value="ECO:0000250"/>
    <property type="project" value="UniProtKB"/>
</dbReference>
<dbReference type="GO" id="GO:1903707">
    <property type="term" value="P:negative regulation of hemopoiesis"/>
    <property type="evidence" value="ECO:0000250"/>
    <property type="project" value="UniProtKB"/>
</dbReference>
<dbReference type="GO" id="GO:0045646">
    <property type="term" value="P:regulation of erythrocyte differentiation"/>
    <property type="evidence" value="ECO:0000250"/>
    <property type="project" value="UniProtKB"/>
</dbReference>
<dbReference type="CDD" id="cd11733">
    <property type="entry name" value="ASKHA_NBD_HSP70_HSPA9"/>
    <property type="match status" value="1"/>
</dbReference>
<dbReference type="FunFam" id="2.60.34.10:FF:000014">
    <property type="entry name" value="Chaperone protein DnaK HSP70"/>
    <property type="match status" value="1"/>
</dbReference>
<dbReference type="FunFam" id="3.30.420.40:FF:000020">
    <property type="entry name" value="Chaperone protein HscA homolog"/>
    <property type="match status" value="1"/>
</dbReference>
<dbReference type="FunFam" id="3.30.30.30:FF:000003">
    <property type="entry name" value="Heat shock protein 9"/>
    <property type="match status" value="1"/>
</dbReference>
<dbReference type="FunFam" id="3.30.420.40:FF:000004">
    <property type="entry name" value="Molecular chaperone DnaK"/>
    <property type="match status" value="1"/>
</dbReference>
<dbReference type="FunFam" id="3.90.640.10:FF:000003">
    <property type="entry name" value="Molecular chaperone DnaK"/>
    <property type="match status" value="1"/>
</dbReference>
<dbReference type="FunFam" id="1.20.1270.10:FF:000011">
    <property type="entry name" value="stress-70 protein, mitochondrial isoform X1"/>
    <property type="match status" value="1"/>
</dbReference>
<dbReference type="Gene3D" id="1.20.1270.10">
    <property type="match status" value="1"/>
</dbReference>
<dbReference type="Gene3D" id="3.30.30.30">
    <property type="match status" value="1"/>
</dbReference>
<dbReference type="Gene3D" id="3.30.420.40">
    <property type="match status" value="2"/>
</dbReference>
<dbReference type="Gene3D" id="3.90.640.10">
    <property type="entry name" value="Actin, Chain A, domain 4"/>
    <property type="match status" value="1"/>
</dbReference>
<dbReference type="Gene3D" id="2.60.34.10">
    <property type="entry name" value="Substrate Binding Domain Of DNAk, Chain A, domain 1"/>
    <property type="match status" value="1"/>
</dbReference>
<dbReference type="HAMAP" id="MF_00332">
    <property type="entry name" value="DnaK"/>
    <property type="match status" value="1"/>
</dbReference>
<dbReference type="InterPro" id="IPR043129">
    <property type="entry name" value="ATPase_NBD"/>
</dbReference>
<dbReference type="InterPro" id="IPR012725">
    <property type="entry name" value="Chaperone_DnaK"/>
</dbReference>
<dbReference type="InterPro" id="IPR018181">
    <property type="entry name" value="Heat_shock_70_CS"/>
</dbReference>
<dbReference type="InterPro" id="IPR029048">
    <property type="entry name" value="HSP70_C_sf"/>
</dbReference>
<dbReference type="InterPro" id="IPR029047">
    <property type="entry name" value="HSP70_peptide-bd_sf"/>
</dbReference>
<dbReference type="InterPro" id="IPR013126">
    <property type="entry name" value="Hsp_70_fam"/>
</dbReference>
<dbReference type="NCBIfam" id="NF001413">
    <property type="entry name" value="PRK00290.1"/>
    <property type="match status" value="1"/>
</dbReference>
<dbReference type="NCBIfam" id="NF003520">
    <property type="entry name" value="PRK05183.1"/>
    <property type="match status" value="1"/>
</dbReference>
<dbReference type="NCBIfam" id="TIGR02350">
    <property type="entry name" value="prok_dnaK"/>
    <property type="match status" value="1"/>
</dbReference>
<dbReference type="PANTHER" id="PTHR19375">
    <property type="entry name" value="HEAT SHOCK PROTEIN 70KDA"/>
    <property type="match status" value="1"/>
</dbReference>
<dbReference type="Pfam" id="PF00012">
    <property type="entry name" value="HSP70"/>
    <property type="match status" value="1"/>
</dbReference>
<dbReference type="PRINTS" id="PR00301">
    <property type="entry name" value="HEATSHOCK70"/>
</dbReference>
<dbReference type="SUPFAM" id="SSF53067">
    <property type="entry name" value="Actin-like ATPase domain"/>
    <property type="match status" value="2"/>
</dbReference>
<dbReference type="SUPFAM" id="SSF100920">
    <property type="entry name" value="Heat shock protein 70kD (HSP70), peptide-binding domain"/>
    <property type="match status" value="1"/>
</dbReference>
<dbReference type="PROSITE" id="PS00297">
    <property type="entry name" value="HSP70_1"/>
    <property type="match status" value="1"/>
</dbReference>
<dbReference type="PROSITE" id="PS00329">
    <property type="entry name" value="HSP70_2"/>
    <property type="match status" value="1"/>
</dbReference>
<dbReference type="PROSITE" id="PS01036">
    <property type="entry name" value="HSP70_3"/>
    <property type="match status" value="1"/>
</dbReference>
<comment type="function">
    <text evidence="2 5 6">Mitochondrial chaperone that plays a key role in mitochondrial protein import, folding, and assembly. Plays an essential role in the protein quality control system, the correct folding of proteins, the re-folding of misfolded proteins, and the targeting of proteins for subsequent degradation. These processes are achieved through cycles of ATP binding, ATP hydrolysis, and ADP release, mediated by co-chaperones. In mitochondria, it associates with the TIM (translocase of the inner membrane) protein complex to assist in the import and folding of mitochondrial proteins (By similarity). Plays an important role in mitochondrial iron-sulfur cluster (ISC) biogenesis, interacts with and stabilizes ISC cluster assembly proteins FXN, NFU1, NFS1 and ISCU. Regulates erythropoiesis via stabilization of ISC assembly. Regulates mitochondrial calcium-dependent apoptosis by coupling two calcium channels, ITPR1 and VDAC1, at the mitochondria-associated endoplasmic reticulum (ER) membrane to facilitate calcium transport from the ER lumen to the mitochondria intermembrane space, providing calcium for the downstream calcium channel MCU, which releases it into the mitochondrial matrix (By similarity). Although primarily located in the mitochondria, it is also found in other cellular compartments. In the cytosol, it associates with proteins involved in signaling, apoptosis, or senescence. It may play a role in cell cycle regulation via its interaction with and promotion of degradation of TP53 (By similarity). May play a role in the control of cell proliferation and cellular aging (By similarity). Protects against reactive oxygen species (ROS) (By similarity). Extracellular HSPA9 plays a cytoprotective role by preventing cell lysis following immune attack by the membrane attack complex by disrupting formation of the complex (By similarity).</text>
</comment>
<comment type="catalytic activity">
    <reaction evidence="5">
        <text>ATP + H2O = ADP + phosphate + H(+)</text>
        <dbReference type="Rhea" id="RHEA:13065"/>
        <dbReference type="ChEBI" id="CHEBI:15377"/>
        <dbReference type="ChEBI" id="CHEBI:15378"/>
        <dbReference type="ChEBI" id="CHEBI:30616"/>
        <dbReference type="ChEBI" id="CHEBI:43474"/>
        <dbReference type="ChEBI" id="CHEBI:456216"/>
        <dbReference type="EC" id="3.6.4.10"/>
    </reaction>
    <physiologicalReaction direction="left-to-right" evidence="5">
        <dbReference type="Rhea" id="RHEA:13066"/>
    </physiologicalReaction>
</comment>
<comment type="activity regulation">
    <text evidence="4 5">The chaperone activity is regulated by ATP-induced allosteric coupling of the nucleotide-binding (NBD) and substrate-binding (SBD) domains. ATP binding in the NBD leads to a conformational change in the NBD, which is transferred through the interdomain linker (IDL) to the substrate-binding domain (SBD). This elicits a reduced substrate affinity and a faster substrate exchange rate. Upon hydrolysis of ATP to ADP, the protein undergoes a conformational change that increases its affinity for substrate proteins. It cycles through repeated phases of ATP hydrolysis and nucleotide exchange, facilitating repeated cycles of substrate binding and release (By similarity). Functions in collaboration with co-chaperones. Functions with the co-chaperone, DNLZ, to maintain solubility and regulate ATP hydrolysis. Nucleotide exchange factors, GRPEL1 and GRPEL2, accelerate nucleotide exchange (By similarity).</text>
</comment>
<comment type="subunit">
    <text evidence="5 7">Interacts strongly with the intermediate form of FXN and weakly with its mature form. Interacts with HSCB. Associates with the mitochondrial contact site and cristae organizing system (MICOS) complex, composed of at least MICOS10/MIC10, CHCHD3/MIC19, CHCHD6/MIC25, APOOL/MIC27, IMMT/MIC60, APOO/MIC23/MIC26 and QIL1/MIC13. This complex was also known under the names MINOS or MitOS complex. The MICOS complex associates with mitochondrial outer membrane proteins SAMM50, MTX1, MTX2 and DNAJC11, mitochondrial inner membrane protein TMEM11 and with HSPA9. Interacts with DNLZ, the interaction is required to prevent self-aggregation. Interacts with TESPA1. Interacts with PDPN. Interacts with NFU1, NFS1 and ISCU. Interacts with TP53; the interaction promotes TP53 degradation (By similarity). Interacts (via SBD domain) with UBXN2A; the interaction with UBXN2A inhibits HSPA9/MOT-2 interaction with and degradation of TP53, thereby promotes TP53 translocation to the nucleus (By similarity). Interacts with ITPR1 AND VDAC1; this interaction couples ITPR1 to VDAC1 (By similarity). Component of the TIM23 mitochondrial inner membrane pre-sequence translocase complex (By similarity).</text>
</comment>
<comment type="subcellular location">
    <subcellularLocation>
        <location evidence="9">Mitochondrion</location>
    </subcellularLocation>
    <subcellularLocation>
        <location evidence="5">Nucleus</location>
        <location evidence="5">Nucleolus</location>
    </subcellularLocation>
    <subcellularLocation>
        <location evidence="5">Cytoplasm</location>
    </subcellularLocation>
    <subcellularLocation>
        <location evidence="7">Mitochondrion matrix</location>
    </subcellularLocation>
    <text evidence="7">Found in a complex with HSPA9 and VDAC1 at the endoplasmic reticulum-mitochondria contact sites.</text>
</comment>
<comment type="domain">
    <text evidence="3">The N-terminal nucleotide binding domain (NBD) is responsible for binding and hydrolyzing ATP. The C-terminal substrate-binding domain (SBD) binds to the client/substrate proteins. The two domains are allosterically coupled so that, when ATP is bound to the NBD, the SBD binds relatively weakly to clients. When ADP is bound in the NBD, a conformational change enhances the affinity of the SBD for client proteins.</text>
</comment>
<comment type="similarity">
    <text evidence="10">Belongs to the heat shock protein 70 family.</text>
</comment>
<accession>O35501</accession>
<name>HSPA9_CRIGR</name>
<gene>
    <name evidence="5" type="primary">HSPA9</name>
</gene>
<keyword id="KW-0007">Acetylation</keyword>
<keyword id="KW-0067">ATP-binding</keyword>
<keyword id="KW-0143">Chaperone</keyword>
<keyword id="KW-0963">Cytoplasm</keyword>
<keyword id="KW-0378">Hydrolase</keyword>
<keyword id="KW-0488">Methylation</keyword>
<keyword id="KW-0496">Mitochondrion</keyword>
<keyword id="KW-0547">Nucleotide-binding</keyword>
<keyword id="KW-0539">Nucleus</keyword>
<keyword id="KW-0597">Phosphoprotein</keyword>
<keyword id="KW-0809">Transit peptide</keyword>
<reference key="1">
    <citation type="journal article" date="1997" name="Exp. Cell Res.">
        <title>Cloning and some novel characteristics of mitochondrial Hsp70 from Chinese hamster cells.</title>
        <authorList>
            <person name="Singh B."/>
            <person name="Soltys B.J."/>
            <person name="Wu Z.C."/>
            <person name="Patel H.V."/>
            <person name="Freeman K.B."/>
            <person name="Gupta R.S."/>
        </authorList>
    </citation>
    <scope>NUCLEOTIDE SEQUENCE [MRNA]</scope>
    <scope>SUBCELLULAR LOCATION</scope>
</reference>
<evidence type="ECO:0000250" key="1"/>
<evidence type="ECO:0000250" key="2">
    <source>
        <dbReference type="UniProtKB" id="P0CS90"/>
    </source>
</evidence>
<evidence type="ECO:0000250" key="3">
    <source>
        <dbReference type="UniProtKB" id="P0DMV8"/>
    </source>
</evidence>
<evidence type="ECO:0000250" key="4">
    <source>
        <dbReference type="UniProtKB" id="P11021"/>
    </source>
</evidence>
<evidence type="ECO:0000250" key="5">
    <source>
        <dbReference type="UniProtKB" id="P38646"/>
    </source>
</evidence>
<evidence type="ECO:0000250" key="6">
    <source>
        <dbReference type="UniProtKB" id="P38647"/>
    </source>
</evidence>
<evidence type="ECO:0000250" key="7">
    <source>
        <dbReference type="UniProtKB" id="P48721"/>
    </source>
</evidence>
<evidence type="ECO:0000256" key="8">
    <source>
        <dbReference type="SAM" id="MobiDB-lite"/>
    </source>
</evidence>
<evidence type="ECO:0000269" key="9">
    <source>
    </source>
</evidence>
<evidence type="ECO:0000305" key="10"/>
<feature type="transit peptide" description="Mitochondrion" evidence="5">
    <location>
        <begin position="1"/>
        <end position="46"/>
    </location>
</feature>
<feature type="chain" id="PRO_0000013562" description="Stress-70 protein, mitochondrial">
    <location>
        <begin position="47"/>
        <end position="679"/>
    </location>
</feature>
<feature type="region of interest" description="Interaction with NFS1" evidence="5">
    <location>
        <begin position="1"/>
        <end position="432"/>
    </location>
</feature>
<feature type="region of interest" description="Nucleotide-binding domain (NBD)" evidence="5">
    <location>
        <begin position="63"/>
        <end position="431"/>
    </location>
</feature>
<feature type="region of interest" description="Interaction with FXN and ISCU" evidence="5">
    <location>
        <begin position="432"/>
        <end position="679"/>
    </location>
</feature>
<feature type="region of interest" description="Interdomain linker" evidence="5">
    <location>
        <begin position="432"/>
        <end position="441"/>
    </location>
</feature>
<feature type="region of interest" description="Substrate-binding domain (SBD)" evidence="5">
    <location>
        <begin position="442"/>
        <end position="679"/>
    </location>
</feature>
<feature type="region of interest" description="Disordered" evidence="8">
    <location>
        <begin position="656"/>
        <end position="679"/>
    </location>
</feature>
<feature type="compositionally biased region" description="Basic and acidic residues" evidence="8">
    <location>
        <begin position="669"/>
        <end position="679"/>
    </location>
</feature>
<feature type="binding site" evidence="5">
    <location>
        <position position="63"/>
    </location>
    <ligand>
        <name>ADP</name>
        <dbReference type="ChEBI" id="CHEBI:456216"/>
    </ligand>
</feature>
<feature type="binding site" evidence="5">
    <location>
        <position position="64"/>
    </location>
    <ligand>
        <name>ADP</name>
        <dbReference type="ChEBI" id="CHEBI:456216"/>
    </ligand>
</feature>
<feature type="binding site" evidence="5">
    <location>
        <position position="313"/>
    </location>
    <ligand>
        <name>ADP</name>
        <dbReference type="ChEBI" id="CHEBI:456216"/>
    </ligand>
</feature>
<feature type="binding site" evidence="5">
    <location>
        <position position="316"/>
    </location>
    <ligand>
        <name>ADP</name>
        <dbReference type="ChEBI" id="CHEBI:456216"/>
    </ligand>
</feature>
<feature type="binding site" evidence="5">
    <location>
        <position position="320"/>
    </location>
    <ligand>
        <name>ADP</name>
        <dbReference type="ChEBI" id="CHEBI:456216"/>
    </ligand>
</feature>
<feature type="binding site" evidence="5">
    <location>
        <position position="388"/>
    </location>
    <ligand>
        <name>ADP</name>
        <dbReference type="ChEBI" id="CHEBI:456216"/>
    </ligand>
</feature>
<feature type="binding site" evidence="5">
    <location>
        <position position="391"/>
    </location>
    <ligand>
        <name>ADP</name>
        <dbReference type="ChEBI" id="CHEBI:456216"/>
    </ligand>
</feature>
<feature type="modified residue" description="N6-acetyllysine" evidence="6">
    <location>
        <position position="76"/>
    </location>
</feature>
<feature type="modified residue" description="Phosphothreonine" evidence="5">
    <location>
        <position position="87"/>
    </location>
</feature>
<feature type="modified residue" description="N6-acetyllysine; alternate" evidence="5">
    <location>
        <position position="135"/>
    </location>
</feature>
<feature type="modified residue" description="N6-succinyllysine; alternate" evidence="6">
    <location>
        <position position="135"/>
    </location>
</feature>
<feature type="modified residue" description="N6-acetyllysine; alternate" evidence="5">
    <location>
        <position position="138"/>
    </location>
</feature>
<feature type="modified residue" description="N6-succinyllysine; alternate" evidence="6">
    <location>
        <position position="138"/>
    </location>
</feature>
<feature type="modified residue" description="N6-acetyllysine" evidence="5">
    <location>
        <position position="143"/>
    </location>
</feature>
<feature type="modified residue" description="N6-acetyllysine; alternate" evidence="6">
    <location>
        <position position="206"/>
    </location>
</feature>
<feature type="modified residue" description="N6-malonyllysine; alternate" evidence="1">
    <location>
        <position position="206"/>
    </location>
</feature>
<feature type="modified residue" description="N6-succinyllysine; alternate" evidence="6">
    <location>
        <position position="206"/>
    </location>
</feature>
<feature type="modified residue" description="N6-acetyllysine" evidence="5">
    <location>
        <position position="234"/>
    </location>
</feature>
<feature type="modified residue" description="N6-acetyllysine" evidence="5">
    <location>
        <position position="288"/>
    </location>
</feature>
<feature type="modified residue" description="N6-acetyllysine; alternate" evidence="5">
    <location>
        <position position="300"/>
    </location>
</feature>
<feature type="modified residue" description="N6-succinyllysine; alternate" evidence="6">
    <location>
        <position position="300"/>
    </location>
</feature>
<feature type="modified residue" description="N6-acetyllysine; alternate" evidence="6">
    <location>
        <position position="360"/>
    </location>
</feature>
<feature type="modified residue" description="N6-succinyllysine; alternate" evidence="6">
    <location>
        <position position="360"/>
    </location>
</feature>
<feature type="modified residue" description="N6-succinyllysine" evidence="6">
    <location>
        <position position="368"/>
    </location>
</feature>
<feature type="modified residue" description="N6-succinyllysine" evidence="6">
    <location>
        <position position="394"/>
    </location>
</feature>
<feature type="modified residue" description="Phosphoserine" evidence="5">
    <location>
        <position position="408"/>
    </location>
</feature>
<feature type="modified residue" description="Omega-N-methylarginine" evidence="5">
    <location>
        <position position="513"/>
    </location>
</feature>
<feature type="modified residue" description="N6-acetyllysine; alternate" evidence="5">
    <location>
        <position position="567"/>
    </location>
</feature>
<feature type="modified residue" description="N6-succinyllysine; alternate" evidence="6">
    <location>
        <position position="567"/>
    </location>
</feature>
<feature type="modified residue" description="N6-acetyllysine; alternate" evidence="6">
    <location>
        <position position="600"/>
    </location>
</feature>
<feature type="modified residue" description="N6-succinyllysine; alternate" evidence="6">
    <location>
        <position position="600"/>
    </location>
</feature>
<feature type="modified residue" description="N6-succinyllysine" evidence="6">
    <location>
        <position position="610"/>
    </location>
</feature>
<feature type="modified residue" description="N6-acetyllysine" evidence="6">
    <location>
        <position position="612"/>
    </location>
</feature>
<feature type="modified residue" description="N6-acetyllysine; alternate" evidence="5">
    <location>
        <position position="646"/>
    </location>
</feature>
<feature type="modified residue" description="N6-succinyllysine; alternate" evidence="6">
    <location>
        <position position="646"/>
    </location>
</feature>
<sequence>MISATRAAAARLVGTAASRTPAAARHQDGWNGLSHEAFRFVSRRDYASETIKGAVVGIDLGTTNSCVAVMEGKQAKVLENAEGARTTPSVVAFTADGERLVGMPAKRQAVTNPNNTFYATKRLIGRRYDDPEVQKDTKNVPFKIVRASNGDAWVEAHGKLYSPSQIGAFVLMKMKETAENYLGHTAKNAVITVPAYFNDSQRQATKDAGQISGLNVLRVINEPTAAALAYGLDKSEDKIIAVYDLGGGTFDISILEIQKGVFEVKSTNGDTFLGGEDFDQALLRHIVKEFKRETGVDLTKDNMALQRVREAAEKAKCELSSSVQTDINLPYLTMDASGPKHLNMKLTRAQFEGIVTDLIKRTIAPCQKAMQDAEVSKSDIGEVILVGGMTRMPKVQQTVQDLFGRAPSKAVNPDEAVAIGAAIQGGVLAGDVTDVLLLDVTPLSLGIETLGGVFTKLINRNTTIPTKKSQVFSTAADGQTQVEIKVCQGEREMAGDNKLLGQFTLIGIPPAPRGVPQIEVTFDLDANGIVHVSAKDKGTGREQQIVIQSSGGLSKDDIENMVKNAEKYAEEDRRKKERVEAVNMAEGIIHDTETKMEEFKDQLPADECNKLKEEISKMRELLARKDSETGENIRQAASSLQQASLKLFEMAYKKMASEREGSGSSGTGEQKEDQKEEKQ</sequence>
<protein>
    <recommendedName>
        <fullName evidence="5">Stress-70 protein, mitochondrial</fullName>
        <ecNumber evidence="5">3.6.4.10</ecNumber>
    </recommendedName>
    <alternativeName>
        <fullName>75 kDa glucose-regulated protein</fullName>
        <shortName>GRP-75</shortName>
    </alternativeName>
    <alternativeName>
        <fullName>Heat shock 70 kDa protein 9</fullName>
    </alternativeName>
</protein>
<proteinExistence type="evidence at transcript level"/>
<organism>
    <name type="scientific">Cricetulus griseus</name>
    <name type="common">Chinese hamster</name>
    <name type="synonym">Cricetulus barabensis griseus</name>
    <dbReference type="NCBI Taxonomy" id="10029"/>
    <lineage>
        <taxon>Eukaryota</taxon>
        <taxon>Metazoa</taxon>
        <taxon>Chordata</taxon>
        <taxon>Craniata</taxon>
        <taxon>Vertebrata</taxon>
        <taxon>Euteleostomi</taxon>
        <taxon>Mammalia</taxon>
        <taxon>Eutheria</taxon>
        <taxon>Euarchontoglires</taxon>
        <taxon>Glires</taxon>
        <taxon>Rodentia</taxon>
        <taxon>Myomorpha</taxon>
        <taxon>Muroidea</taxon>
        <taxon>Cricetidae</taxon>
        <taxon>Cricetinae</taxon>
        <taxon>Cricetulus</taxon>
    </lineage>
</organism>